<comment type="function">
    <text evidence="3 5">Cleaves the 2'-5' phosphodiester linkage at the branch point of excised lariat intron RNA and converts them into linear molecules that can be subsequently degraded, thereby facilitating ribonucleotide turnover (PubMed:11355701). Linked to its role in pre-mRNA processing mechanism, may also participate in retrovirus replication and have an antiviral cell-intrinsic defense function (By similarity).</text>
</comment>
<comment type="cofactor">
    <cofactor evidence="2">
        <name>Fe(2+)</name>
        <dbReference type="ChEBI" id="CHEBI:29033"/>
    </cofactor>
    <cofactor evidence="2">
        <name>Zn(2+)</name>
        <dbReference type="ChEBI" id="CHEBI:29105"/>
    </cofactor>
    <cofactor evidence="3">
        <name>Mn(2+)</name>
        <dbReference type="ChEBI" id="CHEBI:29035"/>
    </cofactor>
    <text evidence="2">Binds 2 divalent metal cations per subunit.</text>
</comment>
<comment type="activity regulation">
    <text evidence="2 3">Active in presence of diverse metals including Fe(2+), Zn(2+), Mn(2+) (By similarity). Also activated by Ca(2+) (By similarity). Binds two metal cations in two adjacent alpha and beta metal-binding pockets (By similarity).</text>
</comment>
<comment type="subcellular location">
    <subcellularLocation>
        <location evidence="6">Nucleus</location>
    </subcellularLocation>
</comment>
<comment type="similarity">
    <text evidence="6">Belongs to the lariat debranching enzyme family.</text>
</comment>
<comment type="sequence caution" evidence="6">
    <conflict type="frameshift">
        <sequence resource="EMBL-CDS" id="AAK18789"/>
    </conflict>
</comment>
<gene>
    <name type="primary">Dbr1</name>
</gene>
<accession>Q923B1</accession>
<accession>Q8C1T9</accession>
<accession>Q8C7J7</accession>
<accession>Q99MT1</accession>
<reference key="1">
    <citation type="journal article" date="2001" name="Mol. Cells">
        <title>Cloning, expression, and complementation test of the RNA lariat debranching enzyme cDNA from mouse.</title>
        <authorList>
            <person name="Kim H.-C."/>
            <person name="Kim G.-M."/>
            <person name="Yang J.-M."/>
            <person name="Ki J.W."/>
        </authorList>
    </citation>
    <scope>NUCLEOTIDE SEQUENCE [MRNA]</scope>
    <scope>FUNCTION</scope>
</reference>
<reference key="2">
    <citation type="journal article" date="2005" name="Science">
        <title>The transcriptional landscape of the mammalian genome.</title>
        <authorList>
            <person name="Carninci P."/>
            <person name="Kasukawa T."/>
            <person name="Katayama S."/>
            <person name="Gough J."/>
            <person name="Frith M.C."/>
            <person name="Maeda N."/>
            <person name="Oyama R."/>
            <person name="Ravasi T."/>
            <person name="Lenhard B."/>
            <person name="Wells C."/>
            <person name="Kodzius R."/>
            <person name="Shimokawa K."/>
            <person name="Bajic V.B."/>
            <person name="Brenner S.E."/>
            <person name="Batalov S."/>
            <person name="Forrest A.R."/>
            <person name="Zavolan M."/>
            <person name="Davis M.J."/>
            <person name="Wilming L.G."/>
            <person name="Aidinis V."/>
            <person name="Allen J.E."/>
            <person name="Ambesi-Impiombato A."/>
            <person name="Apweiler R."/>
            <person name="Aturaliya R.N."/>
            <person name="Bailey T.L."/>
            <person name="Bansal M."/>
            <person name="Baxter L."/>
            <person name="Beisel K.W."/>
            <person name="Bersano T."/>
            <person name="Bono H."/>
            <person name="Chalk A.M."/>
            <person name="Chiu K.P."/>
            <person name="Choudhary V."/>
            <person name="Christoffels A."/>
            <person name="Clutterbuck D.R."/>
            <person name="Crowe M.L."/>
            <person name="Dalla E."/>
            <person name="Dalrymple B.P."/>
            <person name="de Bono B."/>
            <person name="Della Gatta G."/>
            <person name="di Bernardo D."/>
            <person name="Down T."/>
            <person name="Engstrom P."/>
            <person name="Fagiolini M."/>
            <person name="Faulkner G."/>
            <person name="Fletcher C.F."/>
            <person name="Fukushima T."/>
            <person name="Furuno M."/>
            <person name="Futaki S."/>
            <person name="Gariboldi M."/>
            <person name="Georgii-Hemming P."/>
            <person name="Gingeras T.R."/>
            <person name="Gojobori T."/>
            <person name="Green R.E."/>
            <person name="Gustincich S."/>
            <person name="Harbers M."/>
            <person name="Hayashi Y."/>
            <person name="Hensch T.K."/>
            <person name="Hirokawa N."/>
            <person name="Hill D."/>
            <person name="Huminiecki L."/>
            <person name="Iacono M."/>
            <person name="Ikeo K."/>
            <person name="Iwama A."/>
            <person name="Ishikawa T."/>
            <person name="Jakt M."/>
            <person name="Kanapin A."/>
            <person name="Katoh M."/>
            <person name="Kawasawa Y."/>
            <person name="Kelso J."/>
            <person name="Kitamura H."/>
            <person name="Kitano H."/>
            <person name="Kollias G."/>
            <person name="Krishnan S.P."/>
            <person name="Kruger A."/>
            <person name="Kummerfeld S.K."/>
            <person name="Kurochkin I.V."/>
            <person name="Lareau L.F."/>
            <person name="Lazarevic D."/>
            <person name="Lipovich L."/>
            <person name="Liu J."/>
            <person name="Liuni S."/>
            <person name="McWilliam S."/>
            <person name="Madan Babu M."/>
            <person name="Madera M."/>
            <person name="Marchionni L."/>
            <person name="Matsuda H."/>
            <person name="Matsuzawa S."/>
            <person name="Miki H."/>
            <person name="Mignone F."/>
            <person name="Miyake S."/>
            <person name="Morris K."/>
            <person name="Mottagui-Tabar S."/>
            <person name="Mulder N."/>
            <person name="Nakano N."/>
            <person name="Nakauchi H."/>
            <person name="Ng P."/>
            <person name="Nilsson R."/>
            <person name="Nishiguchi S."/>
            <person name="Nishikawa S."/>
            <person name="Nori F."/>
            <person name="Ohara O."/>
            <person name="Okazaki Y."/>
            <person name="Orlando V."/>
            <person name="Pang K.C."/>
            <person name="Pavan W.J."/>
            <person name="Pavesi G."/>
            <person name="Pesole G."/>
            <person name="Petrovsky N."/>
            <person name="Piazza S."/>
            <person name="Reed J."/>
            <person name="Reid J.F."/>
            <person name="Ring B.Z."/>
            <person name="Ringwald M."/>
            <person name="Rost B."/>
            <person name="Ruan Y."/>
            <person name="Salzberg S.L."/>
            <person name="Sandelin A."/>
            <person name="Schneider C."/>
            <person name="Schoenbach C."/>
            <person name="Sekiguchi K."/>
            <person name="Semple C.A."/>
            <person name="Seno S."/>
            <person name="Sessa L."/>
            <person name="Sheng Y."/>
            <person name="Shibata Y."/>
            <person name="Shimada H."/>
            <person name="Shimada K."/>
            <person name="Silva D."/>
            <person name="Sinclair B."/>
            <person name="Sperling S."/>
            <person name="Stupka E."/>
            <person name="Sugiura K."/>
            <person name="Sultana R."/>
            <person name="Takenaka Y."/>
            <person name="Taki K."/>
            <person name="Tammoja K."/>
            <person name="Tan S.L."/>
            <person name="Tang S."/>
            <person name="Taylor M.S."/>
            <person name="Tegner J."/>
            <person name="Teichmann S.A."/>
            <person name="Ueda H.R."/>
            <person name="van Nimwegen E."/>
            <person name="Verardo R."/>
            <person name="Wei C.L."/>
            <person name="Yagi K."/>
            <person name="Yamanishi H."/>
            <person name="Zabarovsky E."/>
            <person name="Zhu S."/>
            <person name="Zimmer A."/>
            <person name="Hide W."/>
            <person name="Bult C."/>
            <person name="Grimmond S.M."/>
            <person name="Teasdale R.D."/>
            <person name="Liu E.T."/>
            <person name="Brusic V."/>
            <person name="Quackenbush J."/>
            <person name="Wahlestedt C."/>
            <person name="Mattick J.S."/>
            <person name="Hume D.A."/>
            <person name="Kai C."/>
            <person name="Sasaki D."/>
            <person name="Tomaru Y."/>
            <person name="Fukuda S."/>
            <person name="Kanamori-Katayama M."/>
            <person name="Suzuki M."/>
            <person name="Aoki J."/>
            <person name="Arakawa T."/>
            <person name="Iida J."/>
            <person name="Imamura K."/>
            <person name="Itoh M."/>
            <person name="Kato T."/>
            <person name="Kawaji H."/>
            <person name="Kawagashira N."/>
            <person name="Kawashima T."/>
            <person name="Kojima M."/>
            <person name="Kondo S."/>
            <person name="Konno H."/>
            <person name="Nakano K."/>
            <person name="Ninomiya N."/>
            <person name="Nishio T."/>
            <person name="Okada M."/>
            <person name="Plessy C."/>
            <person name="Shibata K."/>
            <person name="Shiraki T."/>
            <person name="Suzuki S."/>
            <person name="Tagami M."/>
            <person name="Waki K."/>
            <person name="Watahiki A."/>
            <person name="Okamura-Oho Y."/>
            <person name="Suzuki H."/>
            <person name="Kawai J."/>
            <person name="Hayashizaki Y."/>
        </authorList>
    </citation>
    <scope>NUCLEOTIDE SEQUENCE [LARGE SCALE MRNA]</scope>
    <source>
        <strain>C57BL/6J</strain>
        <tissue>Brain</tissue>
        <tissue>Liver</tissue>
    </source>
</reference>
<reference key="3">
    <citation type="journal article" date="2004" name="Genome Res.">
        <title>The status, quality, and expansion of the NIH full-length cDNA project: the Mammalian Gene Collection (MGC).</title>
        <authorList>
            <consortium name="The MGC Project Team"/>
        </authorList>
    </citation>
    <scope>NUCLEOTIDE SEQUENCE [LARGE SCALE MRNA]</scope>
    <source>
        <strain>Czech II</strain>
        <tissue>Mammary tumor</tissue>
    </source>
</reference>
<reference key="4">
    <citation type="journal article" date="2009" name="Immunity">
        <title>The phagosomal proteome in interferon-gamma-activated macrophages.</title>
        <authorList>
            <person name="Trost M."/>
            <person name="English L."/>
            <person name="Lemieux S."/>
            <person name="Courcelles M."/>
            <person name="Desjardins M."/>
            <person name="Thibault P."/>
        </authorList>
    </citation>
    <scope>PHOSPHORYLATION [LARGE SCALE ANALYSIS] AT SER-505 AND SER-520</scope>
    <scope>IDENTIFICATION BY MASS SPECTROMETRY [LARGE SCALE ANALYSIS]</scope>
</reference>
<reference key="5">
    <citation type="journal article" date="2010" name="Cell">
        <title>A tissue-specific atlas of mouse protein phosphorylation and expression.</title>
        <authorList>
            <person name="Huttlin E.L."/>
            <person name="Jedrychowski M.P."/>
            <person name="Elias J.E."/>
            <person name="Goswami T."/>
            <person name="Rad R."/>
            <person name="Beausoleil S.A."/>
            <person name="Villen J."/>
            <person name="Haas W."/>
            <person name="Sowa M.E."/>
            <person name="Gygi S.P."/>
        </authorList>
    </citation>
    <scope>PHOSPHORYLATION [LARGE SCALE ANALYSIS] AT SER-28; SER-489; SER-491; SER-494 AND SER-505</scope>
    <scope>IDENTIFICATION BY MASS SPECTROMETRY [LARGE SCALE ANALYSIS]</scope>
    <source>
        <tissue>Brown adipose tissue</tissue>
        <tissue>Kidney</tissue>
        <tissue>Lung</tissue>
        <tissue>Spleen</tissue>
    </source>
</reference>
<organism>
    <name type="scientific">Mus musculus</name>
    <name type="common">Mouse</name>
    <dbReference type="NCBI Taxonomy" id="10090"/>
    <lineage>
        <taxon>Eukaryota</taxon>
        <taxon>Metazoa</taxon>
        <taxon>Chordata</taxon>
        <taxon>Craniata</taxon>
        <taxon>Vertebrata</taxon>
        <taxon>Euteleostomi</taxon>
        <taxon>Mammalia</taxon>
        <taxon>Eutheria</taxon>
        <taxon>Euarchontoglires</taxon>
        <taxon>Glires</taxon>
        <taxon>Rodentia</taxon>
        <taxon>Myomorpha</taxon>
        <taxon>Muroidea</taxon>
        <taxon>Muridae</taxon>
        <taxon>Murinae</taxon>
        <taxon>Mus</taxon>
        <taxon>Mus</taxon>
    </lineage>
</organism>
<keyword id="KW-0007">Acetylation</keyword>
<keyword id="KW-0378">Hydrolase</keyword>
<keyword id="KW-0408">Iron</keyword>
<keyword id="KW-0464">Manganese</keyword>
<keyword id="KW-0479">Metal-binding</keyword>
<keyword id="KW-0507">mRNA processing</keyword>
<keyword id="KW-0539">Nucleus</keyword>
<keyword id="KW-0597">Phosphoprotein</keyword>
<keyword id="KW-1185">Reference proteome</keyword>
<keyword id="KW-0862">Zinc</keyword>
<dbReference type="EC" id="3.1.4.-" evidence="3"/>
<dbReference type="EMBL" id="AF300293">
    <property type="protein sequence ID" value="AAK18789.1"/>
    <property type="status" value="ALT_FRAME"/>
    <property type="molecule type" value="mRNA"/>
</dbReference>
<dbReference type="EMBL" id="AK050090">
    <property type="protein sequence ID" value="BAC34064.1"/>
    <property type="molecule type" value="mRNA"/>
</dbReference>
<dbReference type="EMBL" id="AK090351">
    <property type="protein sequence ID" value="BAC41182.1"/>
    <property type="molecule type" value="mRNA"/>
</dbReference>
<dbReference type="EMBL" id="BC006661">
    <property type="protein sequence ID" value="AAH06661.1"/>
    <property type="molecule type" value="mRNA"/>
</dbReference>
<dbReference type="CCDS" id="CCDS23435.1"/>
<dbReference type="RefSeq" id="NP_113580.2">
    <property type="nucleotide sequence ID" value="NM_031403.3"/>
</dbReference>
<dbReference type="SMR" id="Q923B1"/>
<dbReference type="BioGRID" id="219967">
    <property type="interactions" value="4"/>
</dbReference>
<dbReference type="FunCoup" id="Q923B1">
    <property type="interactions" value="3754"/>
</dbReference>
<dbReference type="STRING" id="10090.ENSMUSP00000070991"/>
<dbReference type="GlyGen" id="Q923B1">
    <property type="glycosylation" value="1 site, 1 O-linked glycan (1 site)"/>
</dbReference>
<dbReference type="iPTMnet" id="Q923B1"/>
<dbReference type="PhosphoSitePlus" id="Q923B1"/>
<dbReference type="SwissPalm" id="Q923B1"/>
<dbReference type="jPOST" id="Q923B1"/>
<dbReference type="PaxDb" id="10090-ENSMUSP00000070991"/>
<dbReference type="PeptideAtlas" id="Q923B1"/>
<dbReference type="ProteomicsDB" id="279278"/>
<dbReference type="Pumba" id="Q923B1"/>
<dbReference type="Antibodypedia" id="33423">
    <property type="antibodies" value="157 antibodies from 19 providers"/>
</dbReference>
<dbReference type="DNASU" id="83703"/>
<dbReference type="Ensembl" id="ENSMUST00000066650.12">
    <property type="protein sequence ID" value="ENSMUSP00000070991.6"/>
    <property type="gene ID" value="ENSMUSG00000032469.13"/>
</dbReference>
<dbReference type="GeneID" id="83703"/>
<dbReference type="KEGG" id="mmu:83703"/>
<dbReference type="UCSC" id="uc009rei.1">
    <property type="organism name" value="mouse"/>
</dbReference>
<dbReference type="AGR" id="MGI:1931520"/>
<dbReference type="CTD" id="51163"/>
<dbReference type="MGI" id="MGI:1931520">
    <property type="gene designation" value="Dbr1"/>
</dbReference>
<dbReference type="VEuPathDB" id="HostDB:ENSMUSG00000032469"/>
<dbReference type="eggNOG" id="KOG2863">
    <property type="taxonomic scope" value="Eukaryota"/>
</dbReference>
<dbReference type="GeneTree" id="ENSGT00510000047481"/>
<dbReference type="HOGENOM" id="CLU_005893_0_2_1"/>
<dbReference type="InParanoid" id="Q923B1"/>
<dbReference type="OMA" id="GIDDPLC"/>
<dbReference type="OrthoDB" id="407609at2759"/>
<dbReference type="PhylomeDB" id="Q923B1"/>
<dbReference type="TreeFam" id="TF313221"/>
<dbReference type="BioGRID-ORCS" id="83703">
    <property type="hits" value="29 hits in 65 CRISPR screens"/>
</dbReference>
<dbReference type="PRO" id="PR:Q923B1"/>
<dbReference type="Proteomes" id="UP000000589">
    <property type="component" value="Chromosome 9"/>
</dbReference>
<dbReference type="RNAct" id="Q923B1">
    <property type="molecule type" value="protein"/>
</dbReference>
<dbReference type="Bgee" id="ENSMUSG00000032469">
    <property type="expression patterns" value="Expressed in optic fissure and 266 other cell types or tissues"/>
</dbReference>
<dbReference type="ExpressionAtlas" id="Q923B1">
    <property type="expression patterns" value="baseline and differential"/>
</dbReference>
<dbReference type="GO" id="GO:0005654">
    <property type="term" value="C:nucleoplasm"/>
    <property type="evidence" value="ECO:0007669"/>
    <property type="project" value="Ensembl"/>
</dbReference>
<dbReference type="GO" id="GO:0005634">
    <property type="term" value="C:nucleus"/>
    <property type="evidence" value="ECO:0000250"/>
    <property type="project" value="UniProtKB"/>
</dbReference>
<dbReference type="GO" id="GO:0046872">
    <property type="term" value="F:metal ion binding"/>
    <property type="evidence" value="ECO:0007669"/>
    <property type="project" value="UniProtKB-KW"/>
</dbReference>
<dbReference type="GO" id="GO:0008419">
    <property type="term" value="F:RNA lariat debranching enzyme activity"/>
    <property type="evidence" value="ECO:0000314"/>
    <property type="project" value="MGI"/>
</dbReference>
<dbReference type="GO" id="GO:0000398">
    <property type="term" value="P:mRNA splicing, via spliceosome"/>
    <property type="evidence" value="ECO:0000314"/>
    <property type="project" value="MGI"/>
</dbReference>
<dbReference type="GO" id="GO:0000292">
    <property type="term" value="P:RNA fragment catabolic process"/>
    <property type="evidence" value="ECO:0007669"/>
    <property type="project" value="Ensembl"/>
</dbReference>
<dbReference type="GO" id="GO:0000375">
    <property type="term" value="P:RNA splicing, via transesterification reactions"/>
    <property type="evidence" value="ECO:0000250"/>
    <property type="project" value="UniProtKB"/>
</dbReference>
<dbReference type="CDD" id="cd00844">
    <property type="entry name" value="MPP_Dbr1_N"/>
    <property type="match status" value="1"/>
</dbReference>
<dbReference type="FunFam" id="3.60.21.10:FF:000035">
    <property type="entry name" value="Lariat debranching enzyme"/>
    <property type="match status" value="1"/>
</dbReference>
<dbReference type="Gene3D" id="3.60.21.10">
    <property type="match status" value="1"/>
</dbReference>
<dbReference type="InterPro" id="IPR004843">
    <property type="entry name" value="Calcineurin-like_PHP_ApaH"/>
</dbReference>
<dbReference type="InterPro" id="IPR007708">
    <property type="entry name" value="DBR1_C"/>
</dbReference>
<dbReference type="InterPro" id="IPR041816">
    <property type="entry name" value="Dbr1_N"/>
</dbReference>
<dbReference type="InterPro" id="IPR029052">
    <property type="entry name" value="Metallo-depent_PP-like"/>
</dbReference>
<dbReference type="PANTHER" id="PTHR12849:SF0">
    <property type="entry name" value="LARIAT DEBRANCHING ENZYME"/>
    <property type="match status" value="1"/>
</dbReference>
<dbReference type="PANTHER" id="PTHR12849">
    <property type="entry name" value="RNA LARIAT DEBRANCHING ENZYME"/>
    <property type="match status" value="1"/>
</dbReference>
<dbReference type="Pfam" id="PF05011">
    <property type="entry name" value="DBR1"/>
    <property type="match status" value="1"/>
</dbReference>
<dbReference type="Pfam" id="PF00149">
    <property type="entry name" value="Metallophos"/>
    <property type="match status" value="1"/>
</dbReference>
<dbReference type="SMART" id="SM01124">
    <property type="entry name" value="DBR1"/>
    <property type="match status" value="1"/>
</dbReference>
<dbReference type="SUPFAM" id="SSF56300">
    <property type="entry name" value="Metallo-dependent phosphatases"/>
    <property type="match status" value="1"/>
</dbReference>
<proteinExistence type="evidence at protein level"/>
<feature type="chain" id="PRO_0000250359" description="Lariat debranching enzyme">
    <location>
        <begin position="1"/>
        <end position="550"/>
    </location>
</feature>
<feature type="region of interest" description="Lariat recognition loop" evidence="1">
    <location>
        <begin position="124"/>
        <end position="154"/>
    </location>
</feature>
<feature type="region of interest" description="Disordered" evidence="4">
    <location>
        <begin position="390"/>
        <end position="550"/>
    </location>
</feature>
<feature type="compositionally biased region" description="Polar residues" evidence="4">
    <location>
        <begin position="416"/>
        <end position="426"/>
    </location>
</feature>
<feature type="compositionally biased region" description="Acidic residues" evidence="4">
    <location>
        <begin position="430"/>
        <end position="445"/>
    </location>
</feature>
<feature type="compositionally biased region" description="Polar residues" evidence="4">
    <location>
        <begin position="450"/>
        <end position="483"/>
    </location>
</feature>
<feature type="compositionally biased region" description="Basic and acidic residues" evidence="4">
    <location>
        <begin position="498"/>
        <end position="528"/>
    </location>
</feature>
<feature type="binding site" evidence="1">
    <location>
        <position position="8"/>
    </location>
    <ligand>
        <name>a divalent metal cation</name>
        <dbReference type="ChEBI" id="CHEBI:60240"/>
        <label>1</label>
    </ligand>
</feature>
<feature type="binding site" evidence="1">
    <location>
        <position position="10"/>
    </location>
    <ligand>
        <name>a divalent metal cation</name>
        <dbReference type="ChEBI" id="CHEBI:60240"/>
        <label>1</label>
    </ligand>
</feature>
<feature type="binding site" evidence="1">
    <location>
        <position position="39"/>
    </location>
    <ligand>
        <name>a divalent metal cation</name>
        <dbReference type="ChEBI" id="CHEBI:60240"/>
        <label>2</label>
    </ligand>
</feature>
<feature type="binding site" evidence="1">
    <location>
        <position position="84"/>
    </location>
    <ligand>
        <name>a divalent metal cation</name>
        <dbReference type="ChEBI" id="CHEBI:60240"/>
        <label>2</label>
    </ligand>
</feature>
<feature type="binding site" evidence="1">
    <location>
        <position position="174"/>
    </location>
    <ligand>
        <name>a divalent metal cation</name>
        <dbReference type="ChEBI" id="CHEBI:60240"/>
        <label>2</label>
    </ligand>
</feature>
<feature type="binding site" evidence="1">
    <location>
        <position position="226"/>
    </location>
    <ligand>
        <name>a divalent metal cation</name>
        <dbReference type="ChEBI" id="CHEBI:60240"/>
        <label>2</label>
    </ligand>
</feature>
<feature type="binding site" evidence="1">
    <location>
        <position position="228"/>
    </location>
    <ligand>
        <name>a divalent metal cation</name>
        <dbReference type="ChEBI" id="CHEBI:60240"/>
        <label>1</label>
    </ligand>
</feature>
<feature type="modified residue" description="Phosphoserine" evidence="8">
    <location>
        <position position="28"/>
    </location>
</feature>
<feature type="modified residue" description="N6-acetyllysine" evidence="3">
    <location>
        <position position="128"/>
    </location>
</feature>
<feature type="modified residue" description="Phosphoserine" evidence="3">
    <location>
        <position position="470"/>
    </location>
</feature>
<feature type="modified residue" description="Phosphoserine" evidence="3">
    <location>
        <position position="480"/>
    </location>
</feature>
<feature type="modified residue" description="Phosphoserine" evidence="3">
    <location>
        <position position="484"/>
    </location>
</feature>
<feature type="modified residue" description="Phosphoserine" evidence="3">
    <location>
        <position position="485"/>
    </location>
</feature>
<feature type="modified residue" description="Phosphoserine" evidence="8">
    <location>
        <position position="489"/>
    </location>
</feature>
<feature type="modified residue" description="Phosphoserine" evidence="8">
    <location>
        <position position="491"/>
    </location>
</feature>
<feature type="modified residue" description="Phosphoserine" evidence="8">
    <location>
        <position position="494"/>
    </location>
</feature>
<feature type="modified residue" description="Phosphoserine" evidence="7 8">
    <location>
        <position position="505"/>
    </location>
</feature>
<feature type="modified residue" description="Phosphoserine" evidence="7">
    <location>
        <position position="520"/>
    </location>
</feature>
<feature type="sequence conflict" description="In Ref. 1; AAK18789." evidence="6" ref="1">
    <original>DL</original>
    <variation>EV</variation>
    <location>
        <begin position="48"/>
        <end position="49"/>
    </location>
</feature>
<feature type="sequence conflict" description="In Ref. 3; AAH06661." evidence="6" ref="3">
    <original>DQ</original>
    <variation>GR</variation>
    <location>
        <begin position="243"/>
        <end position="244"/>
    </location>
</feature>
<feature type="sequence conflict" description="In Ref. 2; BAC41182." evidence="6" ref="2">
    <original>E</original>
    <variation>G</variation>
    <location>
        <position position="270"/>
    </location>
</feature>
<feature type="sequence conflict" description="In Ref. 3; AAH06661." evidence="6" ref="3">
    <location>
        <begin position="434"/>
        <end position="436"/>
    </location>
</feature>
<feature type="sequence conflict" description="In Ref. 2; BAC34064." evidence="6" ref="2">
    <original>I</original>
    <variation>V</variation>
    <location>
        <position position="474"/>
    </location>
</feature>
<feature type="sequence conflict" description="In Ref. 1; AAK18789." evidence="6" ref="1">
    <original>K</original>
    <variation>N</variation>
    <location>
        <position position="517"/>
    </location>
</feature>
<feature type="sequence conflict" description="In Ref. 1; AAK18789." evidence="6" ref="1">
    <original>H</original>
    <variation>P</variation>
    <location>
        <position position="523"/>
    </location>
</feature>
<feature type="sequence conflict" description="In Ref. 2; BAC41182." evidence="6" ref="2">
    <original>P</original>
    <variation>R</variation>
    <location>
        <position position="525"/>
    </location>
</feature>
<feature type="sequence conflict" description="In Ref. 1; AAK18789." evidence="6" ref="1">
    <original>Q</original>
    <variation>P</variation>
    <location>
        <position position="536"/>
    </location>
</feature>
<evidence type="ECO:0000250" key="1">
    <source>
        <dbReference type="UniProtKB" id="C4M1P9"/>
    </source>
</evidence>
<evidence type="ECO:0000250" key="2">
    <source>
        <dbReference type="UniProtKB" id="P24309"/>
    </source>
</evidence>
<evidence type="ECO:0000250" key="3">
    <source>
        <dbReference type="UniProtKB" id="Q9UK59"/>
    </source>
</evidence>
<evidence type="ECO:0000256" key="4">
    <source>
        <dbReference type="SAM" id="MobiDB-lite"/>
    </source>
</evidence>
<evidence type="ECO:0000269" key="5">
    <source>
    </source>
</evidence>
<evidence type="ECO:0000305" key="6"/>
<evidence type="ECO:0007744" key="7">
    <source>
    </source>
</evidence>
<evidence type="ECO:0007744" key="8">
    <source>
    </source>
</evidence>
<protein>
    <recommendedName>
        <fullName>Lariat debranching enzyme</fullName>
        <ecNumber evidence="3">3.1.4.-</ecNumber>
    </recommendedName>
</protein>
<sequence length="550" mass="62289">MRVAVAGCCHGELDKIYETLALAERRGSGPVDLLLCCGDFQAVRNEADLRCMAVPPKYRHMQTFYRYYSGEKKAPVLTIFIGGNHEASNHLQELPYGGWVAPNIYYLGLAGVVKYRGVRIGGISGIFKSHDYRKGHFECPPYNSSTIRSIYHVRNIEVYKLKQLKQPVHIFLSHDWPRNIYHYGNKKQLLKTKSFFRQEVENSTLGSPAASELLEHLQPAYWFSAHLHVKFAALMQHQATDKDQAGKETKFLALDKCLPHRDFLQVLEIEHDPSAPEYLEYDVEWLTVLRATDDLINVTGGLWNMPEDNGLHTRWDYSATEETMKEVMEKLNHDPKVPCNFTMTAACYDPSKPQTQVKLVHRINPQTTEFCAQLGITDINVMIQKAREEEHHQCGEYEQQGDPGTEESEEDRSEYNTDTSALSSINPDEIMLDEEEEEEEEEEEAVSAHSDMNTPSVEPASDQASDLSTSFSDIRNLPSSMFVSSDDASRSPASGEGKCGETVESGDEKDLAKFPLKRLSDEHEPEQRKKIKRRNQAIYAAVDDGDASAE</sequence>
<name>DBR1_MOUSE</name>